<organism>
    <name type="scientific">Archaeoglobus fulgidus (strain ATCC 49558 / DSM 4304 / JCM 9628 / NBRC 100126 / VC-16)</name>
    <dbReference type="NCBI Taxonomy" id="224325"/>
    <lineage>
        <taxon>Archaea</taxon>
        <taxon>Methanobacteriati</taxon>
        <taxon>Methanobacteriota</taxon>
        <taxon>Archaeoglobi</taxon>
        <taxon>Archaeoglobales</taxon>
        <taxon>Archaeoglobaceae</taxon>
        <taxon>Archaeoglobus</taxon>
    </lineage>
</organism>
<accession>O28698</accession>
<keyword id="KW-1185">Reference proteome</keyword>
<keyword id="KW-0732">Signal</keyword>
<gene>
    <name type="ordered locus">AF_1574</name>
</gene>
<name>Y1574_ARCFU</name>
<protein>
    <recommendedName>
        <fullName>Uncharacterized protein AF_1574</fullName>
    </recommendedName>
</protein>
<feature type="signal peptide" evidence="1">
    <location>
        <begin position="1"/>
        <end position="23"/>
    </location>
</feature>
<feature type="chain" id="PRO_0000013664" description="Uncharacterized protein AF_1574">
    <location>
        <begin position="24"/>
        <end position="400"/>
    </location>
</feature>
<reference key="1">
    <citation type="journal article" date="1997" name="Nature">
        <title>The complete genome sequence of the hyperthermophilic, sulphate-reducing archaeon Archaeoglobus fulgidus.</title>
        <authorList>
            <person name="Klenk H.-P."/>
            <person name="Clayton R.A."/>
            <person name="Tomb J.-F."/>
            <person name="White O."/>
            <person name="Nelson K.E."/>
            <person name="Ketchum K.A."/>
            <person name="Dodson R.J."/>
            <person name="Gwinn M.L."/>
            <person name="Hickey E.K."/>
            <person name="Peterson J.D."/>
            <person name="Richardson D.L."/>
            <person name="Kerlavage A.R."/>
            <person name="Graham D.E."/>
            <person name="Kyrpides N.C."/>
            <person name="Fleischmann R.D."/>
            <person name="Quackenbush J."/>
            <person name="Lee N.H."/>
            <person name="Sutton G.G."/>
            <person name="Gill S.R."/>
            <person name="Kirkness E.F."/>
            <person name="Dougherty B.A."/>
            <person name="McKenney K."/>
            <person name="Adams M.D."/>
            <person name="Loftus B.J."/>
            <person name="Peterson S.N."/>
            <person name="Reich C.I."/>
            <person name="McNeil L.K."/>
            <person name="Badger J.H."/>
            <person name="Glodek A."/>
            <person name="Zhou L."/>
            <person name="Overbeek R."/>
            <person name="Gocayne J.D."/>
            <person name="Weidman J.F."/>
            <person name="McDonald L.A."/>
            <person name="Utterback T.R."/>
            <person name="Cotton M.D."/>
            <person name="Spriggs T."/>
            <person name="Artiach P."/>
            <person name="Kaine B.P."/>
            <person name="Sykes S.M."/>
            <person name="Sadow P.W."/>
            <person name="D'Andrea K.P."/>
            <person name="Bowman C."/>
            <person name="Fujii C."/>
            <person name="Garland S.A."/>
            <person name="Mason T.M."/>
            <person name="Olsen G.J."/>
            <person name="Fraser C.M."/>
            <person name="Smith H.O."/>
            <person name="Woese C.R."/>
            <person name="Venter J.C."/>
        </authorList>
    </citation>
    <scope>NUCLEOTIDE SEQUENCE [LARGE SCALE GENOMIC DNA]</scope>
    <source>
        <strain>ATCC 49558 / DSM 4304 / JCM 9628 / NBRC 100126 / VC-16</strain>
    </source>
</reference>
<dbReference type="EMBL" id="AE000782">
    <property type="protein sequence ID" value="AAB89681.1"/>
    <property type="molecule type" value="Genomic_DNA"/>
</dbReference>
<dbReference type="PIR" id="E69446">
    <property type="entry name" value="E69446"/>
</dbReference>
<dbReference type="RefSeq" id="WP_010879071.1">
    <property type="nucleotide sequence ID" value="NC_000917.1"/>
</dbReference>
<dbReference type="STRING" id="224325.AF_1574"/>
<dbReference type="PaxDb" id="224325-AF_1574"/>
<dbReference type="EnsemblBacteria" id="AAB89681">
    <property type="protein sequence ID" value="AAB89681"/>
    <property type="gene ID" value="AF_1574"/>
</dbReference>
<dbReference type="GeneID" id="1484802"/>
<dbReference type="KEGG" id="afu:AF_1574"/>
<dbReference type="eggNOG" id="arCOG06135">
    <property type="taxonomic scope" value="Archaea"/>
</dbReference>
<dbReference type="HOGENOM" id="CLU_648329_0_0_2"/>
<dbReference type="OrthoDB" id="372233at2157"/>
<dbReference type="Proteomes" id="UP000002199">
    <property type="component" value="Chromosome"/>
</dbReference>
<sequence>MSRKLLLALTFLVVLGIAVVVMAATYELFLLFNSWLEGKPLGIVKISVETPKADGICFIAVHRFFTPINPTKAWNQTDVIYRGKVKCGESVVVKDTIRLMQVGARDVNGEVMPIYDSPEYAVVVVSKSGGFNRIIQTDIVKPITEVKVKAEFESGESARPAEAPSTSRTCKISSNPDACVLDVKLAYINSIPGLKTAFGLEGVRPSAMHVEGWGSSCISSEPDTACPPSAWRSGGKKLTISNVGEISDYVSDGQRAIVWGGVEYLYERHAVWDDEFEAYWKYEFFYPRAIGGLSTPQVVGSYTPPPTPPSYAAGPQNGSCEINFEKPYPSDTKLNLTAQAVLNIGEVSLSISISPYQSGDDRHPTPYLSIVDISGKGYPWYYWWYKNNDRMTYEVEFYGS</sequence>
<evidence type="ECO:0000255" key="1"/>
<proteinExistence type="inferred from homology"/>